<gene>
    <name evidence="4" type="primary">Or5p62</name>
    <name evidence="4" type="synonym">Mor204-19</name>
    <name evidence="4" type="synonym">Olfr486</name>
</gene>
<reference key="1">
    <citation type="journal article" date="2002" name="Nat. Neurosci.">
        <title>The olfactory receptor gene superfamily of the mouse.</title>
        <authorList>
            <person name="Zhang X."/>
            <person name="Firestein S."/>
        </authorList>
    </citation>
    <scope>NUCLEOTIDE SEQUENCE [GENOMIC DNA]</scope>
</reference>
<reference key="2">
    <citation type="journal article" date="2002" name="Hum. Mol. Genet.">
        <title>Different evolutionary processes shaped the mouse and human olfactory receptor gene families.</title>
        <authorList>
            <person name="Young J.M."/>
            <person name="Friedman C."/>
            <person name="Williams E.M."/>
            <person name="Ross J.A."/>
            <person name="Tonnes-Priddy L."/>
            <person name="Trask B.J."/>
        </authorList>
    </citation>
    <scope>NUCLEOTIDE SEQUENCE [GENOMIC DNA]</scope>
</reference>
<reference key="3">
    <citation type="journal article" date="2002" name="Hum. Mol. Genet.">
        <authorList>
            <person name="Young J.M."/>
            <person name="Friedman C."/>
            <person name="Williams E.M."/>
            <person name="Ross J.A."/>
            <person name="Tonnes-Priddy L."/>
            <person name="Trask B.J."/>
        </authorList>
    </citation>
    <scope>ERRATUM OF PUBMED:11875048</scope>
</reference>
<sequence length="314" mass="35207">MAFIYNGSQTTVTEFILLGLTDDPVLKVILFCIILCIYLVTVFGNLSTILLIGVSSKLHHPMYFFLSHLASVDMGLSSSVTPNMLVNFLTEKNTISYLGCGIQLSSAAFFGAVEFFLLAAMAYDRLVAICNPLLYSTKMSSQVCIQLVAGSYVGGFLNASFVTHFFFSFLFCGPNRVNHFFCDLSPMMELSCSDVSISEIVISFSAGSFTMTTLFVIVIPYFYIFITILKIRSTEGRQKAFSTCTSHLTAVTLYYGTIIFIYVMPKSTYSRDQNKVVSLFYMLVIPVLNPLIYSLRNNEIKDALKRQFYRKTLL</sequence>
<accession>Q8VFD0</accession>
<organism>
    <name type="scientific">Mus musculus</name>
    <name type="common">Mouse</name>
    <dbReference type="NCBI Taxonomy" id="10090"/>
    <lineage>
        <taxon>Eukaryota</taxon>
        <taxon>Metazoa</taxon>
        <taxon>Chordata</taxon>
        <taxon>Craniata</taxon>
        <taxon>Vertebrata</taxon>
        <taxon>Euteleostomi</taxon>
        <taxon>Mammalia</taxon>
        <taxon>Eutheria</taxon>
        <taxon>Euarchontoglires</taxon>
        <taxon>Glires</taxon>
        <taxon>Rodentia</taxon>
        <taxon>Myomorpha</taxon>
        <taxon>Muroidea</taxon>
        <taxon>Muridae</taxon>
        <taxon>Murinae</taxon>
        <taxon>Mus</taxon>
        <taxon>Mus</taxon>
    </lineage>
</organism>
<proteinExistence type="inferred from homology"/>
<dbReference type="EMBL" id="AY073601">
    <property type="protein sequence ID" value="AAL61264.1"/>
    <property type="molecule type" value="Genomic_DNA"/>
</dbReference>
<dbReference type="EMBL" id="AY317594">
    <property type="protein sequence ID" value="AAP70990.1"/>
    <property type="molecule type" value="Genomic_DNA"/>
</dbReference>
<dbReference type="CCDS" id="CCDS21707.1"/>
<dbReference type="RefSeq" id="NP_666707.1">
    <property type="nucleotide sequence ID" value="NM_146496.1"/>
</dbReference>
<dbReference type="SMR" id="Q8VFD0"/>
<dbReference type="FunCoup" id="Q8VFD0">
    <property type="interactions" value="1130"/>
</dbReference>
<dbReference type="STRING" id="10090.ENSMUSP00000071918"/>
<dbReference type="GlyCosmos" id="Q8VFD0">
    <property type="glycosylation" value="1 site, No reported glycans"/>
</dbReference>
<dbReference type="GlyGen" id="Q8VFD0">
    <property type="glycosylation" value="1 site"/>
</dbReference>
<dbReference type="PaxDb" id="10090-ENSMUSP00000071918"/>
<dbReference type="Ensembl" id="ENSMUST00000072035.4">
    <property type="protein sequence ID" value="ENSMUSP00000071918.4"/>
    <property type="gene ID" value="ENSMUSG00000096068.2"/>
</dbReference>
<dbReference type="GeneID" id="258489"/>
<dbReference type="KEGG" id="mmu:258489"/>
<dbReference type="UCSC" id="uc009jcb.1">
    <property type="organism name" value="mouse"/>
</dbReference>
<dbReference type="AGR" id="MGI:3030320"/>
<dbReference type="CTD" id="258489"/>
<dbReference type="MGI" id="MGI:3030320">
    <property type="gene designation" value="Or5p62"/>
</dbReference>
<dbReference type="VEuPathDB" id="HostDB:ENSMUSG00000096068"/>
<dbReference type="eggNOG" id="ENOG502SKA1">
    <property type="taxonomic scope" value="Eukaryota"/>
</dbReference>
<dbReference type="GeneTree" id="ENSGT01130000278279"/>
<dbReference type="HOGENOM" id="CLU_012526_1_0_1"/>
<dbReference type="InParanoid" id="Q8VFD0"/>
<dbReference type="OrthoDB" id="9596133at2759"/>
<dbReference type="PhylomeDB" id="Q8VFD0"/>
<dbReference type="TreeFam" id="TF338848"/>
<dbReference type="BioGRID-ORCS" id="258489">
    <property type="hits" value="1 hit in 52 CRISPR screens"/>
</dbReference>
<dbReference type="PRO" id="PR:Q8VFD0"/>
<dbReference type="Proteomes" id="UP000000589">
    <property type="component" value="Chromosome 7"/>
</dbReference>
<dbReference type="RNAct" id="Q8VFD0">
    <property type="molecule type" value="protein"/>
</dbReference>
<dbReference type="GO" id="GO:0016020">
    <property type="term" value="C:membrane"/>
    <property type="evidence" value="ECO:0000247"/>
    <property type="project" value="MGI"/>
</dbReference>
<dbReference type="GO" id="GO:0005886">
    <property type="term" value="C:plasma membrane"/>
    <property type="evidence" value="ECO:0007669"/>
    <property type="project" value="UniProtKB-SubCell"/>
</dbReference>
<dbReference type="GO" id="GO:0004930">
    <property type="term" value="F:G protein-coupled receptor activity"/>
    <property type="evidence" value="ECO:0007669"/>
    <property type="project" value="UniProtKB-KW"/>
</dbReference>
<dbReference type="GO" id="GO:0004984">
    <property type="term" value="F:olfactory receptor activity"/>
    <property type="evidence" value="ECO:0000247"/>
    <property type="project" value="MGI"/>
</dbReference>
<dbReference type="GO" id="GO:0007186">
    <property type="term" value="P:G protein-coupled receptor signaling pathway"/>
    <property type="evidence" value="ECO:0000247"/>
    <property type="project" value="MGI"/>
</dbReference>
<dbReference type="GO" id="GO:0007608">
    <property type="term" value="P:sensory perception of smell"/>
    <property type="evidence" value="ECO:0000247"/>
    <property type="project" value="MGI"/>
</dbReference>
<dbReference type="FunFam" id="1.20.1070.10:FF:000004">
    <property type="entry name" value="Olfactory receptor"/>
    <property type="match status" value="1"/>
</dbReference>
<dbReference type="Gene3D" id="1.20.1070.10">
    <property type="entry name" value="Rhodopsin 7-helix transmembrane proteins"/>
    <property type="match status" value="1"/>
</dbReference>
<dbReference type="InterPro" id="IPR000276">
    <property type="entry name" value="GPCR_Rhodpsn"/>
</dbReference>
<dbReference type="InterPro" id="IPR017452">
    <property type="entry name" value="GPCR_Rhodpsn_7TM"/>
</dbReference>
<dbReference type="InterPro" id="IPR000725">
    <property type="entry name" value="Olfact_rcpt"/>
</dbReference>
<dbReference type="PANTHER" id="PTHR48018">
    <property type="entry name" value="OLFACTORY RECEPTOR"/>
    <property type="match status" value="1"/>
</dbReference>
<dbReference type="Pfam" id="PF13853">
    <property type="entry name" value="7tm_4"/>
    <property type="match status" value="1"/>
</dbReference>
<dbReference type="PRINTS" id="PR00237">
    <property type="entry name" value="GPCRRHODOPSN"/>
</dbReference>
<dbReference type="PRINTS" id="PR00245">
    <property type="entry name" value="OLFACTORYR"/>
</dbReference>
<dbReference type="SUPFAM" id="SSF81321">
    <property type="entry name" value="Family A G protein-coupled receptor-like"/>
    <property type="match status" value="1"/>
</dbReference>
<dbReference type="PROSITE" id="PS50262">
    <property type="entry name" value="G_PROTEIN_RECEP_F1_2"/>
    <property type="match status" value="1"/>
</dbReference>
<feature type="chain" id="PRO_0000150843" description="Olfactory receptor 5P62">
    <location>
        <begin position="1"/>
        <end position="314"/>
    </location>
</feature>
<feature type="topological domain" description="Extracellular" evidence="1">
    <location>
        <begin position="1"/>
        <end position="28"/>
    </location>
</feature>
<feature type="transmembrane region" description="Helical; Name=1" evidence="1">
    <location>
        <begin position="29"/>
        <end position="49"/>
    </location>
</feature>
<feature type="topological domain" description="Cytoplasmic" evidence="1">
    <location>
        <begin position="50"/>
        <end position="57"/>
    </location>
</feature>
<feature type="transmembrane region" description="Helical; Name=2" evidence="1">
    <location>
        <begin position="58"/>
        <end position="78"/>
    </location>
</feature>
<feature type="topological domain" description="Extracellular" evidence="1">
    <location>
        <begin position="79"/>
        <end position="102"/>
    </location>
</feature>
<feature type="transmembrane region" description="Helical; Name=3" evidence="1">
    <location>
        <begin position="103"/>
        <end position="123"/>
    </location>
</feature>
<feature type="topological domain" description="Cytoplasmic" evidence="1">
    <location>
        <begin position="124"/>
        <end position="136"/>
    </location>
</feature>
<feature type="transmembrane region" description="Helical; Name=4" evidence="1">
    <location>
        <begin position="137"/>
        <end position="157"/>
    </location>
</feature>
<feature type="topological domain" description="Extracellular" evidence="1">
    <location>
        <begin position="158"/>
        <end position="199"/>
    </location>
</feature>
<feature type="transmembrane region" description="Helical; Name=5" evidence="1">
    <location>
        <begin position="200"/>
        <end position="220"/>
    </location>
</feature>
<feature type="topological domain" description="Cytoplasmic" evidence="1">
    <location>
        <begin position="221"/>
        <end position="240"/>
    </location>
</feature>
<feature type="transmembrane region" description="Helical; Name=6" evidence="1">
    <location>
        <begin position="241"/>
        <end position="261"/>
    </location>
</feature>
<feature type="topological domain" description="Extracellular" evidence="1">
    <location>
        <begin position="262"/>
        <end position="274"/>
    </location>
</feature>
<feature type="transmembrane region" description="Helical; Name=7" evidence="1">
    <location>
        <begin position="275"/>
        <end position="295"/>
    </location>
</feature>
<feature type="topological domain" description="Cytoplasmic" evidence="1">
    <location>
        <begin position="296"/>
        <end position="314"/>
    </location>
</feature>
<feature type="glycosylation site" description="N-linked (GlcNAc...) asparagine" evidence="1">
    <location>
        <position position="6"/>
    </location>
</feature>
<feature type="disulfide bond" evidence="2">
    <location>
        <begin position="100"/>
        <end position="192"/>
    </location>
</feature>
<evidence type="ECO:0000255" key="1"/>
<evidence type="ECO:0000255" key="2">
    <source>
        <dbReference type="PROSITE-ProRule" id="PRU00521"/>
    </source>
</evidence>
<evidence type="ECO:0000305" key="3"/>
<evidence type="ECO:0000312" key="4">
    <source>
        <dbReference type="MGI" id="MGI:3030320"/>
    </source>
</evidence>
<keyword id="KW-1003">Cell membrane</keyword>
<keyword id="KW-1015">Disulfide bond</keyword>
<keyword id="KW-0297">G-protein coupled receptor</keyword>
<keyword id="KW-0325">Glycoprotein</keyword>
<keyword id="KW-0472">Membrane</keyword>
<keyword id="KW-0552">Olfaction</keyword>
<keyword id="KW-0675">Receptor</keyword>
<keyword id="KW-1185">Reference proteome</keyword>
<keyword id="KW-0716">Sensory transduction</keyword>
<keyword id="KW-0807">Transducer</keyword>
<keyword id="KW-0812">Transmembrane</keyword>
<keyword id="KW-1133">Transmembrane helix</keyword>
<protein>
    <recommendedName>
        <fullName evidence="3">Olfactory receptor 5P62</fullName>
    </recommendedName>
    <alternativeName>
        <fullName>Olfactory receptor 204-19</fullName>
    </alternativeName>
    <alternativeName>
        <fullName>Olfactory receptor 486</fullName>
    </alternativeName>
</protein>
<name>O5P62_MOUSE</name>
<comment type="function">
    <text>Potential odorant receptor.</text>
</comment>
<comment type="subcellular location">
    <subcellularLocation>
        <location evidence="3">Cell membrane</location>
        <topology evidence="1">Multi-pass membrane protein</topology>
    </subcellularLocation>
</comment>
<comment type="similarity">
    <text evidence="2">Belongs to the G-protein coupled receptor 1 family.</text>
</comment>